<sequence>MQVESTLFSHPKYWAECFGTAPFLPMSRKEMEKLGWDSCDIIIVTGDAYVDHPSFGMAVIGRMLEAQGYRVGIIAQPDWSSKDAFMQLGRPNLFFGVTAGNMDSMINRYTADRRIRSDDAYTPGDVGGKRPDRAVTVYTQRCKEAFKDVPVIIGGIEASLRRIAHYDYWSDKVRRSVIFDAKADILMYGNAERPLAEVARRLAAGEAIADIQDVRGTAVIRKEPMPEWRGMDSRKIDQLHKIDPIPNPYGADDVGCANLSGPSDAKIFDNDAPKPISVQPPRPKPWDKTYVLLPAFEKVSEDKYLYAHASRILHQEQNPGCARALFQPHGDRGVWVNPPAWPLNTDEMDAVFDLPYKRVPHPAYGKEKIPAYDMIKTSINIMRGCFGGCSFCSITEHEGRIIQSRSQESIIKEIKDIQDKVPGFTGVISDLGGPTANMYRLGCTSEKAEKTCRRLSCVYPSICGHLGTDHKHTIDLYRAARAVPGIKKILIASGVRYDLAIEDPAYVKELVQHHVGGYLKIAPEHTEEGPLSKMMKPGMGAYDKFKELFDKFSKEAGKEQFLIPYFISAHPGTTDEDMLNLALWLKERKFKLDQVQNFYPSPMANATTIYHTELNSLKNVKHTSEVVPVPKKGRQRRLHKALLRYHDPAGWPIIREGLIAMGREDLIGNSPNHLVPPEGRNERGPKWMKDANQGQKALTRFSGNQFDERKGKGDAKGKPSASKPKGPKSGANAPQSQQPKTSRPGAKAPFGQSGFKGKAEQGKAGQNKAGHQGRAGKASSGRQQAK</sequence>
<gene>
    <name type="ordered locus">SO_0311</name>
</gene>
<feature type="chain" id="PRO_0000076395" description="UPF0313 protein SO_0311">
    <location>
        <begin position="1"/>
        <end position="786"/>
    </location>
</feature>
<feature type="domain" description="Radical SAM core" evidence="2">
    <location>
        <begin position="371"/>
        <end position="649"/>
    </location>
</feature>
<feature type="region of interest" description="Disordered" evidence="3">
    <location>
        <begin position="669"/>
        <end position="688"/>
    </location>
</feature>
<feature type="region of interest" description="Disordered" evidence="3">
    <location>
        <begin position="698"/>
        <end position="786"/>
    </location>
</feature>
<feature type="compositionally biased region" description="Basic and acidic residues" evidence="3">
    <location>
        <begin position="679"/>
        <end position="688"/>
    </location>
</feature>
<feature type="compositionally biased region" description="Basic and acidic residues" evidence="3">
    <location>
        <begin position="706"/>
        <end position="717"/>
    </location>
</feature>
<feature type="compositionally biased region" description="Low complexity" evidence="3">
    <location>
        <begin position="718"/>
        <end position="731"/>
    </location>
</feature>
<feature type="compositionally biased region" description="Polar residues" evidence="3">
    <location>
        <begin position="732"/>
        <end position="741"/>
    </location>
</feature>
<feature type="binding site" evidence="1">
    <location>
        <position position="385"/>
    </location>
    <ligand>
        <name>[4Fe-4S] cluster</name>
        <dbReference type="ChEBI" id="CHEBI:49883"/>
        <note>4Fe-4S-S-AdoMet</note>
    </ligand>
</feature>
<feature type="binding site" evidence="1">
    <location>
        <position position="389"/>
    </location>
    <ligand>
        <name>[4Fe-4S] cluster</name>
        <dbReference type="ChEBI" id="CHEBI:49883"/>
        <note>4Fe-4S-S-AdoMet</note>
    </ligand>
</feature>
<feature type="binding site" evidence="1">
    <location>
        <position position="392"/>
    </location>
    <ligand>
        <name>[4Fe-4S] cluster</name>
        <dbReference type="ChEBI" id="CHEBI:49883"/>
        <note>4Fe-4S-S-AdoMet</note>
    </ligand>
</feature>
<accession>Q8EJZ5</accession>
<keyword id="KW-0004">4Fe-4S</keyword>
<keyword id="KW-0408">Iron</keyword>
<keyword id="KW-0411">Iron-sulfur</keyword>
<keyword id="KW-0479">Metal-binding</keyword>
<keyword id="KW-1185">Reference proteome</keyword>
<keyword id="KW-0949">S-adenosyl-L-methionine</keyword>
<reference key="1">
    <citation type="journal article" date="2002" name="Nat. Biotechnol.">
        <title>Genome sequence of the dissimilatory metal ion-reducing bacterium Shewanella oneidensis.</title>
        <authorList>
            <person name="Heidelberg J.F."/>
            <person name="Paulsen I.T."/>
            <person name="Nelson K.E."/>
            <person name="Gaidos E.J."/>
            <person name="Nelson W.C."/>
            <person name="Read T.D."/>
            <person name="Eisen J.A."/>
            <person name="Seshadri R."/>
            <person name="Ward N.L."/>
            <person name="Methe B.A."/>
            <person name="Clayton R.A."/>
            <person name="Meyer T."/>
            <person name="Tsapin A."/>
            <person name="Scott J."/>
            <person name="Beanan M.J."/>
            <person name="Brinkac L.M."/>
            <person name="Daugherty S.C."/>
            <person name="DeBoy R.T."/>
            <person name="Dodson R.J."/>
            <person name="Durkin A.S."/>
            <person name="Haft D.H."/>
            <person name="Kolonay J.F."/>
            <person name="Madupu R."/>
            <person name="Peterson J.D."/>
            <person name="Umayam L.A."/>
            <person name="White O."/>
            <person name="Wolf A.M."/>
            <person name="Vamathevan J.J."/>
            <person name="Weidman J.F."/>
            <person name="Impraim M."/>
            <person name="Lee K."/>
            <person name="Berry K.J."/>
            <person name="Lee C."/>
            <person name="Mueller J."/>
            <person name="Khouri H.M."/>
            <person name="Gill J."/>
            <person name="Utterback T.R."/>
            <person name="McDonald L.A."/>
            <person name="Feldblyum T.V."/>
            <person name="Smith H.O."/>
            <person name="Venter J.C."/>
            <person name="Nealson K.H."/>
            <person name="Fraser C.M."/>
        </authorList>
    </citation>
    <scope>NUCLEOTIDE SEQUENCE [LARGE SCALE GENOMIC DNA]</scope>
    <source>
        <strain>ATCC 700550 / JCM 31522 / CIP 106686 / LMG 19005 / NCIMB 14063 / MR-1</strain>
    </source>
</reference>
<dbReference type="EMBL" id="AE014299">
    <property type="protein sequence ID" value="AAN53396.1"/>
    <property type="molecule type" value="Genomic_DNA"/>
</dbReference>
<dbReference type="RefSeq" id="NP_715951.1">
    <property type="nucleotide sequence ID" value="NC_004347.2"/>
</dbReference>
<dbReference type="RefSeq" id="WP_011070679.1">
    <property type="nucleotide sequence ID" value="NC_004347.2"/>
</dbReference>
<dbReference type="STRING" id="211586.SO_0311"/>
<dbReference type="PaxDb" id="211586-SO_0311"/>
<dbReference type="KEGG" id="son:SO_0311"/>
<dbReference type="PATRIC" id="fig|211586.12.peg.302"/>
<dbReference type="eggNOG" id="COG1032">
    <property type="taxonomic scope" value="Bacteria"/>
</dbReference>
<dbReference type="HOGENOM" id="CLU_018288_2_0_6"/>
<dbReference type="OrthoDB" id="9803479at2"/>
<dbReference type="PhylomeDB" id="Q8EJZ5"/>
<dbReference type="BioCyc" id="SONE211586:G1GMP-298-MONOMER"/>
<dbReference type="Proteomes" id="UP000008186">
    <property type="component" value="Chromosome"/>
</dbReference>
<dbReference type="GO" id="GO:0051539">
    <property type="term" value="F:4 iron, 4 sulfur cluster binding"/>
    <property type="evidence" value="ECO:0007669"/>
    <property type="project" value="UniProtKB-KW"/>
</dbReference>
<dbReference type="GO" id="GO:0003824">
    <property type="term" value="F:catalytic activity"/>
    <property type="evidence" value="ECO:0007669"/>
    <property type="project" value="InterPro"/>
</dbReference>
<dbReference type="GO" id="GO:0005506">
    <property type="term" value="F:iron ion binding"/>
    <property type="evidence" value="ECO:0007669"/>
    <property type="project" value="UniProtKB-UniRule"/>
</dbReference>
<dbReference type="Gene3D" id="3.80.30.20">
    <property type="entry name" value="tm_1862 like domain"/>
    <property type="match status" value="1"/>
</dbReference>
<dbReference type="HAMAP" id="MF_01251">
    <property type="entry name" value="UPF0313"/>
    <property type="match status" value="1"/>
</dbReference>
<dbReference type="InterPro" id="IPR006638">
    <property type="entry name" value="Elp3/MiaA/NifB-like_rSAM"/>
</dbReference>
<dbReference type="InterPro" id="IPR020612">
    <property type="entry name" value="Methylthiotransferase_CS"/>
</dbReference>
<dbReference type="InterPro" id="IPR007197">
    <property type="entry name" value="rSAM"/>
</dbReference>
<dbReference type="InterPro" id="IPR023404">
    <property type="entry name" value="rSAM_horseshoe"/>
</dbReference>
<dbReference type="InterPro" id="IPR022946">
    <property type="entry name" value="UPF0313"/>
</dbReference>
<dbReference type="InterPro" id="IPR024560">
    <property type="entry name" value="UPF0313_C"/>
</dbReference>
<dbReference type="InterPro" id="IPR013704">
    <property type="entry name" value="UPF0313_N"/>
</dbReference>
<dbReference type="NCBIfam" id="TIGR03904">
    <property type="entry name" value="SAM_YgiQ"/>
    <property type="match status" value="1"/>
</dbReference>
<dbReference type="PANTHER" id="PTHR32331">
    <property type="entry name" value="UPF0313 PROTEIN YGIQ"/>
    <property type="match status" value="1"/>
</dbReference>
<dbReference type="PANTHER" id="PTHR32331:SF0">
    <property type="entry name" value="UPF0313 PROTEIN YGIQ"/>
    <property type="match status" value="1"/>
</dbReference>
<dbReference type="Pfam" id="PF11842">
    <property type="entry name" value="DUF3362"/>
    <property type="match status" value="1"/>
</dbReference>
<dbReference type="Pfam" id="PF04055">
    <property type="entry name" value="Radical_SAM"/>
    <property type="match status" value="1"/>
</dbReference>
<dbReference type="Pfam" id="PF08497">
    <property type="entry name" value="Radical_SAM_N"/>
    <property type="match status" value="1"/>
</dbReference>
<dbReference type="SFLD" id="SFLDS00029">
    <property type="entry name" value="Radical_SAM"/>
    <property type="match status" value="1"/>
</dbReference>
<dbReference type="SFLD" id="SFLDG01069">
    <property type="entry name" value="UPF0313"/>
    <property type="match status" value="1"/>
</dbReference>
<dbReference type="SMART" id="SM00729">
    <property type="entry name" value="Elp3"/>
    <property type="match status" value="1"/>
</dbReference>
<dbReference type="SUPFAM" id="SSF102114">
    <property type="entry name" value="Radical SAM enzymes"/>
    <property type="match status" value="1"/>
</dbReference>
<dbReference type="PROSITE" id="PS51918">
    <property type="entry name" value="RADICAL_SAM"/>
    <property type="match status" value="1"/>
</dbReference>
<organism>
    <name type="scientific">Shewanella oneidensis (strain ATCC 700550 / JCM 31522 / CIP 106686 / LMG 19005 / NCIMB 14063 / MR-1)</name>
    <dbReference type="NCBI Taxonomy" id="211586"/>
    <lineage>
        <taxon>Bacteria</taxon>
        <taxon>Pseudomonadati</taxon>
        <taxon>Pseudomonadota</taxon>
        <taxon>Gammaproteobacteria</taxon>
        <taxon>Alteromonadales</taxon>
        <taxon>Shewanellaceae</taxon>
        <taxon>Shewanella</taxon>
    </lineage>
</organism>
<protein>
    <recommendedName>
        <fullName evidence="1">UPF0313 protein SO_0311</fullName>
    </recommendedName>
</protein>
<comment type="cofactor">
    <cofactor evidence="1">
        <name>[4Fe-4S] cluster</name>
        <dbReference type="ChEBI" id="CHEBI:49883"/>
    </cofactor>
    <text evidence="1">Binds 1 [4Fe-4S] cluster. The cluster is coordinated with 3 cysteines and an exchangeable S-adenosyl-L-methionine.</text>
</comment>
<comment type="similarity">
    <text evidence="1">Belongs to the UPF0313 family.</text>
</comment>
<evidence type="ECO:0000255" key="1">
    <source>
        <dbReference type="HAMAP-Rule" id="MF_01251"/>
    </source>
</evidence>
<evidence type="ECO:0000255" key="2">
    <source>
        <dbReference type="PROSITE-ProRule" id="PRU01266"/>
    </source>
</evidence>
<evidence type="ECO:0000256" key="3">
    <source>
        <dbReference type="SAM" id="MobiDB-lite"/>
    </source>
</evidence>
<name>Y311_SHEON</name>
<proteinExistence type="inferred from homology"/>